<accession>P64115</accession>
<accession>Q8NZN0</accession>
<gene>
    <name evidence="1" type="primary">fabH</name>
    <name type="ordered locus">spyM18_1826</name>
</gene>
<organism>
    <name type="scientific">Streptococcus pyogenes serotype M18 (strain MGAS8232)</name>
    <dbReference type="NCBI Taxonomy" id="186103"/>
    <lineage>
        <taxon>Bacteria</taxon>
        <taxon>Bacillati</taxon>
        <taxon>Bacillota</taxon>
        <taxon>Bacilli</taxon>
        <taxon>Lactobacillales</taxon>
        <taxon>Streptococcaceae</taxon>
        <taxon>Streptococcus</taxon>
    </lineage>
</organism>
<comment type="function">
    <text evidence="1">Catalyzes the condensation reaction of fatty acid synthesis by the addition to an acyl acceptor of two carbons from malonyl-ACP. Catalyzes the first condensation reaction which initiates fatty acid synthesis and may therefore play a role in governing the total rate of fatty acid production. Possesses both acetoacetyl-ACP synthase and acetyl transacylase activities. Its substrate specificity determines the biosynthesis of branched-chain and/or straight-chain of fatty acids.</text>
</comment>
<comment type="catalytic activity">
    <reaction evidence="1">
        <text>malonyl-[ACP] + acetyl-CoA + H(+) = 3-oxobutanoyl-[ACP] + CO2 + CoA</text>
        <dbReference type="Rhea" id="RHEA:12080"/>
        <dbReference type="Rhea" id="RHEA-COMP:9623"/>
        <dbReference type="Rhea" id="RHEA-COMP:9625"/>
        <dbReference type="ChEBI" id="CHEBI:15378"/>
        <dbReference type="ChEBI" id="CHEBI:16526"/>
        <dbReference type="ChEBI" id="CHEBI:57287"/>
        <dbReference type="ChEBI" id="CHEBI:57288"/>
        <dbReference type="ChEBI" id="CHEBI:78449"/>
        <dbReference type="ChEBI" id="CHEBI:78450"/>
        <dbReference type="EC" id="2.3.1.180"/>
    </reaction>
</comment>
<comment type="pathway">
    <text evidence="1">Lipid metabolism; fatty acid biosynthesis.</text>
</comment>
<comment type="subunit">
    <text evidence="1">Homodimer.</text>
</comment>
<comment type="subcellular location">
    <subcellularLocation>
        <location evidence="1">Cytoplasm</location>
    </subcellularLocation>
</comment>
<comment type="domain">
    <text evidence="1">The last Arg residue of the ACP-binding site is essential for the weak association between ACP/AcpP and FabH.</text>
</comment>
<comment type="similarity">
    <text evidence="1">Belongs to the thiolase-like superfamily. FabH family.</text>
</comment>
<dbReference type="EC" id="2.3.1.180" evidence="1"/>
<dbReference type="EMBL" id="AE009949">
    <property type="protein sequence ID" value="AAL98345.1"/>
    <property type="molecule type" value="Genomic_DNA"/>
</dbReference>
<dbReference type="RefSeq" id="WP_002988609.1">
    <property type="nucleotide sequence ID" value="NC_003485.1"/>
</dbReference>
<dbReference type="SMR" id="P64115"/>
<dbReference type="KEGG" id="spm:spyM18_1826"/>
<dbReference type="HOGENOM" id="CLU_039592_4_1_9"/>
<dbReference type="UniPathway" id="UPA00094"/>
<dbReference type="GO" id="GO:0005737">
    <property type="term" value="C:cytoplasm"/>
    <property type="evidence" value="ECO:0007669"/>
    <property type="project" value="UniProtKB-SubCell"/>
</dbReference>
<dbReference type="GO" id="GO:0004315">
    <property type="term" value="F:3-oxoacyl-[acyl-carrier-protein] synthase activity"/>
    <property type="evidence" value="ECO:0007669"/>
    <property type="project" value="InterPro"/>
</dbReference>
<dbReference type="GO" id="GO:0033818">
    <property type="term" value="F:beta-ketoacyl-acyl-carrier-protein synthase III activity"/>
    <property type="evidence" value="ECO:0007669"/>
    <property type="project" value="UniProtKB-UniRule"/>
</dbReference>
<dbReference type="GO" id="GO:0006633">
    <property type="term" value="P:fatty acid biosynthetic process"/>
    <property type="evidence" value="ECO:0007669"/>
    <property type="project" value="UniProtKB-UniRule"/>
</dbReference>
<dbReference type="CDD" id="cd00830">
    <property type="entry name" value="KAS_III"/>
    <property type="match status" value="1"/>
</dbReference>
<dbReference type="Gene3D" id="3.40.47.10">
    <property type="match status" value="1"/>
</dbReference>
<dbReference type="HAMAP" id="MF_01815">
    <property type="entry name" value="FabH"/>
    <property type="match status" value="1"/>
</dbReference>
<dbReference type="InterPro" id="IPR013747">
    <property type="entry name" value="ACP_syn_III_C"/>
</dbReference>
<dbReference type="InterPro" id="IPR013751">
    <property type="entry name" value="ACP_syn_III_N"/>
</dbReference>
<dbReference type="InterPro" id="IPR004655">
    <property type="entry name" value="FabH"/>
</dbReference>
<dbReference type="InterPro" id="IPR016039">
    <property type="entry name" value="Thiolase-like"/>
</dbReference>
<dbReference type="NCBIfam" id="TIGR00747">
    <property type="entry name" value="fabH"/>
    <property type="match status" value="1"/>
</dbReference>
<dbReference type="NCBIfam" id="NF006829">
    <property type="entry name" value="PRK09352.1"/>
    <property type="match status" value="1"/>
</dbReference>
<dbReference type="PANTHER" id="PTHR43091">
    <property type="entry name" value="3-OXOACYL-[ACYL-CARRIER-PROTEIN] SYNTHASE"/>
    <property type="match status" value="1"/>
</dbReference>
<dbReference type="PANTHER" id="PTHR43091:SF1">
    <property type="entry name" value="BETA-KETOACYL-[ACYL-CARRIER-PROTEIN] SYNTHASE III, CHLOROPLASTIC"/>
    <property type="match status" value="1"/>
</dbReference>
<dbReference type="Pfam" id="PF08545">
    <property type="entry name" value="ACP_syn_III"/>
    <property type="match status" value="1"/>
</dbReference>
<dbReference type="Pfam" id="PF08541">
    <property type="entry name" value="ACP_syn_III_C"/>
    <property type="match status" value="1"/>
</dbReference>
<dbReference type="SUPFAM" id="SSF53901">
    <property type="entry name" value="Thiolase-like"/>
    <property type="match status" value="1"/>
</dbReference>
<sequence length="324" mass="34848">MIFSKISQVAHYVPQQLVTNNDLASIMDTSHEWIFSRTGIAERHISRDEMTSDLAIQVADQLLTQSGLKADAIDFIIVATISPDATMPSTAAKVQAAIAATSAFAFDMTAACSGFVFALAMADKLIASGAYQNGMVIGAETLSKLVNWQDRATAVLFGDGAGGVLLEASKDKHVLAETLHTDGARCQSLISGETSLSSPYSIGKKAIATIQMDGRAIFDFAIRDVSKSILTLMAQSDITKDDIDYCLLHQANRRILDKIARKIDVPREKFLENMMRYGNTSAASIPILLSEAVQKGQIRLDGTQKILLSGFGGGLTWGSLIVKI</sequence>
<keyword id="KW-0012">Acyltransferase</keyword>
<keyword id="KW-0963">Cytoplasm</keyword>
<keyword id="KW-0275">Fatty acid biosynthesis</keyword>
<keyword id="KW-0276">Fatty acid metabolism</keyword>
<keyword id="KW-0444">Lipid biosynthesis</keyword>
<keyword id="KW-0443">Lipid metabolism</keyword>
<keyword id="KW-0511">Multifunctional enzyme</keyword>
<keyword id="KW-0808">Transferase</keyword>
<name>FABH_STRP8</name>
<protein>
    <recommendedName>
        <fullName evidence="1">Beta-ketoacyl-[acyl-carrier-protein] synthase III</fullName>
        <shortName evidence="1">Beta-ketoacyl-ACP synthase III</shortName>
        <shortName evidence="1">KAS III</shortName>
        <ecNumber evidence="1">2.3.1.180</ecNumber>
    </recommendedName>
    <alternativeName>
        <fullName evidence="1">3-oxoacyl-[acyl-carrier-protein] synthase 3</fullName>
    </alternativeName>
    <alternativeName>
        <fullName evidence="1">3-oxoacyl-[acyl-carrier-protein] synthase III</fullName>
    </alternativeName>
</protein>
<feature type="chain" id="PRO_0000110496" description="Beta-ketoacyl-[acyl-carrier-protein] synthase III">
    <location>
        <begin position="1"/>
        <end position="324"/>
    </location>
</feature>
<feature type="region of interest" description="ACP-binding" evidence="1">
    <location>
        <begin position="250"/>
        <end position="254"/>
    </location>
</feature>
<feature type="active site" evidence="1">
    <location>
        <position position="112"/>
    </location>
</feature>
<feature type="active site" evidence="1">
    <location>
        <position position="249"/>
    </location>
</feature>
<feature type="active site" evidence="1">
    <location>
        <position position="279"/>
    </location>
</feature>
<reference key="1">
    <citation type="journal article" date="2002" name="Proc. Natl. Acad. Sci. U.S.A.">
        <title>Genome sequence and comparative microarray analysis of serotype M18 group A Streptococcus strains associated with acute rheumatic fever outbreaks.</title>
        <authorList>
            <person name="Smoot J.C."/>
            <person name="Barbian K.D."/>
            <person name="Van Gompel J.J."/>
            <person name="Smoot L.M."/>
            <person name="Chaussee M.S."/>
            <person name="Sylva G.L."/>
            <person name="Sturdevant D.E."/>
            <person name="Ricklefs S.M."/>
            <person name="Porcella S.F."/>
            <person name="Parkins L.D."/>
            <person name="Beres S.B."/>
            <person name="Campbell D.S."/>
            <person name="Smith T.M."/>
            <person name="Zhang Q."/>
            <person name="Kapur V."/>
            <person name="Daly J.A."/>
            <person name="Veasy L.G."/>
            <person name="Musser J.M."/>
        </authorList>
    </citation>
    <scope>NUCLEOTIDE SEQUENCE [LARGE SCALE GENOMIC DNA]</scope>
    <source>
        <strain>MGAS8232</strain>
    </source>
</reference>
<evidence type="ECO:0000255" key="1">
    <source>
        <dbReference type="HAMAP-Rule" id="MF_01815"/>
    </source>
</evidence>
<proteinExistence type="inferred from homology"/>